<accession>Q9IG45</accession>
<keyword id="KW-0067">ATP-binding</keyword>
<keyword id="KW-0190">Covalent protein-DNA linkage</keyword>
<keyword id="KW-0235">DNA replication</keyword>
<keyword id="KW-0238">DNA-binding</keyword>
<keyword id="KW-0255">Endonuclease</keyword>
<keyword id="KW-0347">Helicase</keyword>
<keyword id="KW-1048">Host nucleus</keyword>
<keyword id="KW-0378">Hydrolase</keyword>
<keyword id="KW-0479">Metal-binding</keyword>
<keyword id="KW-0511">Multifunctional enzyme</keyword>
<keyword id="KW-0540">Nuclease</keyword>
<keyword id="KW-0547">Nucleotide-binding</keyword>
<keyword id="KW-0548">Nucleotidyltransferase</keyword>
<keyword id="KW-0808">Transferase</keyword>
<comment type="function">
    <text evidence="1">Essential for the replication of viral ssDNA. The closed circular ssDNA genome is first converted to a superhelical dsDNA. Rep and/or Rep' binds a specific hairpin at the genome origin of replication. Introduces an endonucleolytic nick within the conserved sequence 5'-AGTATTAC-3' in the intergenic region of the genome, thereby initiating the rolling circle replication (RCR). Following cleavage, binds covalently to the 5'-phosphate of DNA as a tyrosyl ester. The cleavage gives rise to a free 3'-OH that serves as a primer for the cellular DNA polymerase. The polymerase synthesizes the (+) strand DNA by rolling circle mechanism. After one round of replication, a Rep-catalyzed nucleotidyl transfer reaction releases a circular single-stranded virus genome, thereby terminating the replication. Displays origin-specific DNA cleavage, nucleotidyl transferase, ATPase and helicase activities. ATPase activity is probably carried by the isoform Rep (By similarity).</text>
</comment>
<comment type="catalytic activity">
    <reaction>
        <text>ATP + H2O = ADP + phosphate + H(+)</text>
        <dbReference type="Rhea" id="RHEA:13065"/>
        <dbReference type="ChEBI" id="CHEBI:15377"/>
        <dbReference type="ChEBI" id="CHEBI:15378"/>
        <dbReference type="ChEBI" id="CHEBI:30616"/>
        <dbReference type="ChEBI" id="CHEBI:43474"/>
        <dbReference type="ChEBI" id="CHEBI:456216"/>
    </reaction>
</comment>
<comment type="cofactor">
    <cofactor evidence="5">
        <name>Mg(2+)</name>
        <dbReference type="ChEBI" id="CHEBI:18420"/>
    </cofactor>
    <cofactor evidence="5">
        <name>Mn(2+)</name>
        <dbReference type="ChEBI" id="CHEBI:29035"/>
    </cofactor>
    <text evidence="5">Divalent metal cations, possibly Mg(2+) or Mn(2+).</text>
</comment>
<comment type="subunit">
    <text evidence="1">Interacts with the capsid protein; this interaction relocates Rep into the nucleus.</text>
</comment>
<comment type="subcellular location">
    <subcellularLocation>
        <location evidence="5">Host nucleus</location>
    </subcellularLocation>
</comment>
<comment type="domain">
    <text>There are 3 rolling circle replication (RCR) motifs. RCR-2 is probably involved in metal coordination. RCR-3 is required for phosphodiester bond cleavage for initiation of RCR.</text>
</comment>
<comment type="similarity">
    <text evidence="5">Belongs to the nanoviruses/circoviruses replication-associated protein family.</text>
</comment>
<name>REP_PICV</name>
<organism>
    <name type="scientific">Pigeon circovirus</name>
    <name type="common">PiCV</name>
    <name type="synonym">Columbid circovirus</name>
    <dbReference type="NCBI Taxonomy" id="126070"/>
    <lineage>
        <taxon>Viruses</taxon>
        <taxon>Monodnaviria</taxon>
        <taxon>Shotokuvirae</taxon>
        <taxon>Cressdnaviricota</taxon>
        <taxon>Arfiviricetes</taxon>
        <taxon>Cirlivirales</taxon>
        <taxon>Circoviridae</taxon>
        <taxon>Circovirus</taxon>
        <taxon>Circovirus pigeon</taxon>
        <taxon>Pigeon circovirus</taxon>
    </lineage>
</organism>
<feature type="chain" id="PRO_0000319865" description="Replication-associated protein">
    <location>
        <begin position="1"/>
        <end position="317"/>
    </location>
</feature>
<feature type="domain" description="CRESS-DNA virus Rep endonuclease" evidence="3">
    <location>
        <begin position="33"/>
        <end position="130"/>
    </location>
</feature>
<feature type="region of interest" description="Disordered" evidence="4">
    <location>
        <begin position="1"/>
        <end position="34"/>
    </location>
</feature>
<feature type="short sequence motif" description="Nuclear localization signal" evidence="2">
    <location>
        <begin position="5"/>
        <end position="40"/>
    </location>
</feature>
<feature type="short sequence motif" description="RCR-1" evidence="3">
    <location>
        <begin position="40"/>
        <end position="43"/>
    </location>
</feature>
<feature type="short sequence motif" description="RCR-2" evidence="3">
    <location>
        <begin position="78"/>
        <end position="80"/>
    </location>
</feature>
<feature type="short sequence motif" description="Nuclear localization signal" evidence="2">
    <location>
        <begin position="87"/>
        <end position="107"/>
    </location>
</feature>
<feature type="short sequence motif" description="RCR-3" evidence="3">
    <location>
        <begin position="116"/>
        <end position="119"/>
    </location>
</feature>
<feature type="compositionally biased region" description="Basic and acidic residues" evidence="4">
    <location>
        <begin position="21"/>
        <end position="34"/>
    </location>
</feature>
<feature type="active site" description="For DNA cleavage activity" evidence="3">
    <location>
        <position position="116"/>
    </location>
</feature>
<feature type="binding site" evidence="2">
    <location>
        <position position="70"/>
    </location>
    <ligand>
        <name>a divalent metal cation</name>
        <dbReference type="ChEBI" id="CHEBI:60240"/>
    </ligand>
</feature>
<feature type="binding site" evidence="2">
    <location>
        <position position="78"/>
    </location>
    <ligand>
        <name>a divalent metal cation</name>
        <dbReference type="ChEBI" id="CHEBI:60240"/>
    </ligand>
</feature>
<feature type="binding site" evidence="2">
    <location>
        <position position="120"/>
    </location>
    <ligand>
        <name>a divalent metal cation</name>
        <dbReference type="ChEBI" id="CHEBI:60240"/>
    </ligand>
</feature>
<feature type="binding site" evidence="1">
    <location>
        <begin position="192"/>
        <end position="199"/>
    </location>
    <ligand>
        <name>ATP</name>
        <dbReference type="ChEBI" id="CHEBI:30616"/>
    </ligand>
</feature>
<organismHost>
    <name type="scientific">Columba livia</name>
    <name type="common">Rock dove</name>
    <dbReference type="NCBI Taxonomy" id="8932"/>
</organismHost>
<reference key="1">
    <citation type="journal article" date="2000" name="Arch. Virol.">
        <title>Cloning and sequencing of columbid circovirus (coCV), a new circovirus from pigeons.</title>
        <authorList>
            <person name="Mankertz A."/>
            <person name="Hattermann K."/>
            <person name="Ehlers B."/>
            <person name="Soike D."/>
        </authorList>
    </citation>
    <scope>NUCLEOTIDE SEQUENCE [GENOMIC DNA]</scope>
</reference>
<protein>
    <recommendedName>
        <fullName>Replication-associated protein</fullName>
        <ecNumber>2.7.7.-</ecNumber>
        <ecNumber>3.1.21.-</ecNumber>
        <ecNumber>3.6.1.-</ecNumber>
    </recommendedName>
    <alternativeName>
        <fullName>ATP-dependent helicase Rep</fullName>
    </alternativeName>
    <alternativeName>
        <fullName>RepP</fullName>
    </alternativeName>
</protein>
<evidence type="ECO:0000250" key="1"/>
<evidence type="ECO:0000255" key="2"/>
<evidence type="ECO:0000255" key="3">
    <source>
        <dbReference type="PROSITE-ProRule" id="PRU01364"/>
    </source>
</evidence>
<evidence type="ECO:0000256" key="4">
    <source>
        <dbReference type="SAM" id="MobiDB-lite"/>
    </source>
</evidence>
<evidence type="ECO:0000305" key="5"/>
<proteinExistence type="inferred from homology"/>
<gene>
    <name type="primary">rep</name>
</gene>
<dbReference type="EC" id="2.7.7.-"/>
<dbReference type="EC" id="3.1.21.-"/>
<dbReference type="EC" id="3.6.1.-"/>
<dbReference type="EMBL" id="AF252610">
    <property type="protein sequence ID" value="AAF74196.1"/>
    <property type="molecule type" value="Genomic_DNA"/>
</dbReference>
<dbReference type="RefSeq" id="NP_059527.1">
    <property type="nucleotide sequence ID" value="NC_002361.1"/>
</dbReference>
<dbReference type="SMR" id="Q9IG45"/>
<dbReference type="GeneID" id="1460801"/>
<dbReference type="KEGG" id="vg:1460801"/>
<dbReference type="OrthoDB" id="9195at10239"/>
<dbReference type="Proteomes" id="UP000000473">
    <property type="component" value="Genome"/>
</dbReference>
<dbReference type="GO" id="GO:0042025">
    <property type="term" value="C:host cell nucleus"/>
    <property type="evidence" value="ECO:0007669"/>
    <property type="project" value="UniProtKB-SubCell"/>
</dbReference>
<dbReference type="GO" id="GO:0005524">
    <property type="term" value="F:ATP binding"/>
    <property type="evidence" value="ECO:0007669"/>
    <property type="project" value="UniProtKB-KW"/>
</dbReference>
<dbReference type="GO" id="GO:0016887">
    <property type="term" value="F:ATP hydrolysis activity"/>
    <property type="evidence" value="ECO:0007669"/>
    <property type="project" value="RHEA"/>
</dbReference>
<dbReference type="GO" id="GO:0003677">
    <property type="term" value="F:DNA binding"/>
    <property type="evidence" value="ECO:0007669"/>
    <property type="project" value="UniProtKB-KW"/>
</dbReference>
<dbReference type="GO" id="GO:0004519">
    <property type="term" value="F:endonuclease activity"/>
    <property type="evidence" value="ECO:0007669"/>
    <property type="project" value="UniProtKB-KW"/>
</dbReference>
<dbReference type="GO" id="GO:0046872">
    <property type="term" value="F:metal ion binding"/>
    <property type="evidence" value="ECO:0007669"/>
    <property type="project" value="UniProtKB-KW"/>
</dbReference>
<dbReference type="GO" id="GO:0016779">
    <property type="term" value="F:nucleotidyltransferase activity"/>
    <property type="evidence" value="ECO:0007669"/>
    <property type="project" value="UniProtKB-KW"/>
</dbReference>
<dbReference type="GO" id="GO:0003723">
    <property type="term" value="F:RNA binding"/>
    <property type="evidence" value="ECO:0007669"/>
    <property type="project" value="InterPro"/>
</dbReference>
<dbReference type="GO" id="GO:0003724">
    <property type="term" value="F:RNA helicase activity"/>
    <property type="evidence" value="ECO:0007669"/>
    <property type="project" value="InterPro"/>
</dbReference>
<dbReference type="GO" id="GO:0006260">
    <property type="term" value="P:DNA replication"/>
    <property type="evidence" value="ECO:0007669"/>
    <property type="project" value="UniProtKB-KW"/>
</dbReference>
<dbReference type="Gene3D" id="3.40.1310.20">
    <property type="match status" value="1"/>
</dbReference>
<dbReference type="InterPro" id="IPR049912">
    <property type="entry name" value="CRESS_DNA_REP"/>
</dbReference>
<dbReference type="InterPro" id="IPR000605">
    <property type="entry name" value="Helicase_SF3_ssDNA/RNA_vir"/>
</dbReference>
<dbReference type="InterPro" id="IPR027417">
    <property type="entry name" value="P-loop_NTPase"/>
</dbReference>
<dbReference type="Pfam" id="PF00910">
    <property type="entry name" value="RNA_helicase"/>
    <property type="match status" value="1"/>
</dbReference>
<dbReference type="Pfam" id="PF02407">
    <property type="entry name" value="Viral_Rep"/>
    <property type="match status" value="1"/>
</dbReference>
<dbReference type="SUPFAM" id="SSF52540">
    <property type="entry name" value="P-loop containing nucleoside triphosphate hydrolases"/>
    <property type="match status" value="1"/>
</dbReference>
<dbReference type="PROSITE" id="PS52020">
    <property type="entry name" value="CRESS_DNA_REP"/>
    <property type="match status" value="1"/>
</dbReference>
<sequence>MAPCKPGSNPPKGRVSAAEGGARREATRRPPREAAAKRWCFTLNNPTEEEIKSLETWLVSDFHYAIVGKEVGEQGTPHLQGFVHLKQKKRLPQLKQLFKRAHWEKARGSDEDNEKYCSKEGNVLLTLGIPAKGNRSDLSEAVAAVKAGRAMTEVARDFSEIYVKYGRGLRDLKLLIGQQPRDFKTEVIVITGPPGCGKSRWAADYPGSKFYKMKGEWWDGYDHQEVVIIDDFYGWLPFCELLRVTDRYPHKVPVKGAFVEFTSRVIIVTSNSPPDAWYSEERCCVQALFRRINKWLVWNHDKFEDAPDCMKKYPINY</sequence>